<comment type="function">
    <text evidence="1">Component of the Mediator complex, a coactivator involved in the regulated transcription of nearly all RNA polymerase II-dependent genes. Mediator functions as a bridge to convey information from gene-specific regulatory proteins to the basal RNA polymerase II transcription machinery. Mediator is recruited to promoters by direct interactions with regulatory proteins and serves as a scaffold for the assembly of a functional preinitiation complex with RNA polymerase II and the general transcription factors (By similarity).</text>
</comment>
<comment type="subunit">
    <text evidence="1">Component of the Mediator complex, which is composed of MED1, MED4, MED6, MED7, MED8, MED9, MED10, MED11, MED12, MED13, MED13L, MED14, MED15, MED16, MED17, MED18, MED19, MED20, MED21, MED22, MED23, MED24, MED25, MED26, MED27, MED29, MED30, MED31, CCNC, CDK8 and CDC2L6/CDK11. The MED12, MED13, CCNC and CDK8 subunits form a distinct module termed the CDK8 module. Mediator containing the CDK8 module is less active than Mediator lacking this module in supporting transcriptional activation. Individual preparations of the Mediator complex lacking one or more distinct subunits have been variously termed ARC, CRSP, DRIP, PC2, SMCC and TRAP (By similarity).</text>
</comment>
<comment type="subcellular location">
    <subcellularLocation>
        <location evidence="1">Nucleus</location>
    </subcellularLocation>
</comment>
<comment type="similarity">
    <text evidence="5">Belongs to the Mediator complex subunit 4 family.</text>
</comment>
<keyword id="KW-0007">Acetylation</keyword>
<keyword id="KW-0010">Activator</keyword>
<keyword id="KW-0175">Coiled coil</keyword>
<keyword id="KW-0539">Nucleus</keyword>
<keyword id="KW-0597">Phosphoprotein</keyword>
<keyword id="KW-1185">Reference proteome</keyword>
<keyword id="KW-0804">Transcription</keyword>
<keyword id="KW-0805">Transcription regulation</keyword>
<feature type="initiator methionine" description="Removed" evidence="2">
    <location>
        <position position="1"/>
    </location>
</feature>
<feature type="chain" id="PRO_0000302064" description="Mediator of RNA polymerase II transcription subunit 4">
    <location>
        <begin position="2"/>
        <end position="270"/>
    </location>
</feature>
<feature type="region of interest" description="Disordered" evidence="4">
    <location>
        <begin position="1"/>
        <end position="22"/>
    </location>
</feature>
<feature type="region of interest" description="Disordered" evidence="4">
    <location>
        <begin position="227"/>
        <end position="270"/>
    </location>
</feature>
<feature type="coiled-coil region" evidence="3">
    <location>
        <begin position="26"/>
        <end position="131"/>
    </location>
</feature>
<feature type="compositionally biased region" description="Low complexity" evidence="4">
    <location>
        <begin position="259"/>
        <end position="270"/>
    </location>
</feature>
<feature type="modified residue" description="N-acetylalanine" evidence="2">
    <location>
        <position position="2"/>
    </location>
</feature>
<feature type="modified residue" description="Phosphoserine" evidence="2">
    <location>
        <position position="32"/>
    </location>
</feature>
<organism>
    <name type="scientific">Rattus norvegicus</name>
    <name type="common">Rat</name>
    <dbReference type="NCBI Taxonomy" id="10116"/>
    <lineage>
        <taxon>Eukaryota</taxon>
        <taxon>Metazoa</taxon>
        <taxon>Chordata</taxon>
        <taxon>Craniata</taxon>
        <taxon>Vertebrata</taxon>
        <taxon>Euteleostomi</taxon>
        <taxon>Mammalia</taxon>
        <taxon>Eutheria</taxon>
        <taxon>Euarchontoglires</taxon>
        <taxon>Glires</taxon>
        <taxon>Rodentia</taxon>
        <taxon>Myomorpha</taxon>
        <taxon>Muroidea</taxon>
        <taxon>Muridae</taxon>
        <taxon>Murinae</taxon>
        <taxon>Rattus</taxon>
    </lineage>
</organism>
<name>MED4_RAT</name>
<dbReference type="EMBL" id="BC093402">
    <property type="protein sequence ID" value="AAH93402.1"/>
    <property type="molecule type" value="mRNA"/>
</dbReference>
<dbReference type="RefSeq" id="NP_001019427.1">
    <property type="nucleotide sequence ID" value="NM_001024256.1"/>
</dbReference>
<dbReference type="SMR" id="Q561Q8"/>
<dbReference type="FunCoup" id="Q561Q8">
    <property type="interactions" value="3807"/>
</dbReference>
<dbReference type="STRING" id="10116.ENSRNOP00000023195"/>
<dbReference type="PhosphoSitePlus" id="Q561Q8"/>
<dbReference type="jPOST" id="Q561Q8"/>
<dbReference type="PaxDb" id="10116-ENSRNOP00000023195"/>
<dbReference type="GeneID" id="306030"/>
<dbReference type="KEGG" id="rno:306030"/>
<dbReference type="UCSC" id="RGD:1306671">
    <property type="organism name" value="rat"/>
</dbReference>
<dbReference type="AGR" id="RGD:1306671"/>
<dbReference type="CTD" id="29079"/>
<dbReference type="RGD" id="1306671">
    <property type="gene designation" value="Med4"/>
</dbReference>
<dbReference type="VEuPathDB" id="HostDB:ENSRNOG00000017170"/>
<dbReference type="eggNOG" id="KOG4552">
    <property type="taxonomic scope" value="Eukaryota"/>
</dbReference>
<dbReference type="HOGENOM" id="CLU_082233_0_0_1"/>
<dbReference type="InParanoid" id="Q561Q8"/>
<dbReference type="OrthoDB" id="65417at9989"/>
<dbReference type="PhylomeDB" id="Q561Q8"/>
<dbReference type="TreeFam" id="TF324421"/>
<dbReference type="Reactome" id="R-RNO-9841922">
    <property type="pathway name" value="MLL4 and MLL3 complexes regulate expression of PPARG target genes in adipogenesis and hepatic steatosis"/>
</dbReference>
<dbReference type="PRO" id="PR:Q561Q8"/>
<dbReference type="Proteomes" id="UP000002494">
    <property type="component" value="Chromosome 15"/>
</dbReference>
<dbReference type="Bgee" id="ENSRNOG00000017170">
    <property type="expression patterns" value="Expressed in skeletal muscle tissue and 20 other cell types or tissues"/>
</dbReference>
<dbReference type="GO" id="GO:0070847">
    <property type="term" value="C:core mediator complex"/>
    <property type="evidence" value="ECO:0000266"/>
    <property type="project" value="RGD"/>
</dbReference>
<dbReference type="GO" id="GO:0016592">
    <property type="term" value="C:mediator complex"/>
    <property type="evidence" value="ECO:0000266"/>
    <property type="project" value="RGD"/>
</dbReference>
<dbReference type="GO" id="GO:0005634">
    <property type="term" value="C:nucleus"/>
    <property type="evidence" value="ECO:0000266"/>
    <property type="project" value="RGD"/>
</dbReference>
<dbReference type="GO" id="GO:0046966">
    <property type="term" value="F:nuclear thyroid hormone receptor binding"/>
    <property type="evidence" value="ECO:0000266"/>
    <property type="project" value="RGD"/>
</dbReference>
<dbReference type="GO" id="GO:0003713">
    <property type="term" value="F:transcription coactivator activity"/>
    <property type="evidence" value="ECO:0000266"/>
    <property type="project" value="RGD"/>
</dbReference>
<dbReference type="GO" id="GO:0003712">
    <property type="term" value="F:transcription coregulator activity"/>
    <property type="evidence" value="ECO:0000266"/>
    <property type="project" value="RGD"/>
</dbReference>
<dbReference type="GO" id="GO:0045893">
    <property type="term" value="P:positive regulation of DNA-templated transcription"/>
    <property type="evidence" value="ECO:0000266"/>
    <property type="project" value="RGD"/>
</dbReference>
<dbReference type="GO" id="GO:0060261">
    <property type="term" value="P:positive regulation of transcription initiation by RNA polymerase II"/>
    <property type="evidence" value="ECO:0000266"/>
    <property type="project" value="RGD"/>
</dbReference>
<dbReference type="GO" id="GO:0006357">
    <property type="term" value="P:regulation of transcription by RNA polymerase II"/>
    <property type="evidence" value="ECO:0000318"/>
    <property type="project" value="GO_Central"/>
</dbReference>
<dbReference type="GO" id="GO:0006366">
    <property type="term" value="P:transcription by RNA polymerase II"/>
    <property type="evidence" value="ECO:0000266"/>
    <property type="project" value="RGD"/>
</dbReference>
<dbReference type="InterPro" id="IPR019258">
    <property type="entry name" value="Mediator_Med4"/>
</dbReference>
<dbReference type="PANTHER" id="PTHR13208">
    <property type="entry name" value="MEDIATOR OF RNA POLYMERASE II TRANSCRIPTION SUBUNIT 4"/>
    <property type="match status" value="1"/>
</dbReference>
<dbReference type="PANTHER" id="PTHR13208:SF2">
    <property type="entry name" value="MEDIATOR OF RNA POLYMERASE II TRANSCRIPTION SUBUNIT 4"/>
    <property type="match status" value="1"/>
</dbReference>
<dbReference type="Pfam" id="PF10018">
    <property type="entry name" value="Med4"/>
    <property type="match status" value="1"/>
</dbReference>
<sequence>MAASSSGEKEKERMGGVSGMTGLGSTRERLLSALEDLEVLSRELIEMLAISRNQKLLQLEEENQVLELLIHRDGDFQELMKLALNQGKVHHEMQALEKEVEKRDSDIQQLQKQLKEAEQILATAVYQAKEKLKSIEKARKGAISSEEIIKYAHRISASNAVCAPLTWVPGDPRRPYPTDLEMRSGLLGQMNNPSTSGVNGHLPGDALAAGRLPDVLAPQYPWQSNDMSVNMLPPNHSTDFLLEPPGHNKENEDDVEVMSTDSSSSSSDSD</sequence>
<gene>
    <name type="primary">Med4</name>
</gene>
<evidence type="ECO:0000250" key="1"/>
<evidence type="ECO:0000250" key="2">
    <source>
        <dbReference type="UniProtKB" id="Q9NPJ6"/>
    </source>
</evidence>
<evidence type="ECO:0000255" key="3"/>
<evidence type="ECO:0000256" key="4">
    <source>
        <dbReference type="SAM" id="MobiDB-lite"/>
    </source>
</evidence>
<evidence type="ECO:0000305" key="5"/>
<accession>Q561Q8</accession>
<proteinExistence type="evidence at transcript level"/>
<protein>
    <recommendedName>
        <fullName>Mediator of RNA polymerase II transcription subunit 4</fullName>
    </recommendedName>
    <alternativeName>
        <fullName>Mediator complex subunit 4</fullName>
    </alternativeName>
</protein>
<reference key="1">
    <citation type="journal article" date="2004" name="Genome Res.">
        <title>The status, quality, and expansion of the NIH full-length cDNA project: the Mammalian Gene Collection (MGC).</title>
        <authorList>
            <consortium name="The MGC Project Team"/>
        </authorList>
    </citation>
    <scope>NUCLEOTIDE SEQUENCE [LARGE SCALE MRNA]</scope>
    <source>
        <tissue>Thymus</tissue>
    </source>
</reference>